<evidence type="ECO:0000250" key="1"/>
<evidence type="ECO:0000250" key="2">
    <source>
        <dbReference type="UniProtKB" id="P41148"/>
    </source>
</evidence>
<evidence type="ECO:0000255" key="3"/>
<evidence type="ECO:0000256" key="4">
    <source>
        <dbReference type="SAM" id="MobiDB-lite"/>
    </source>
</evidence>
<evidence type="ECO:0000305" key="5"/>
<reference key="1">
    <citation type="journal article" date="1993" name="Plant Mol. Biol.">
        <title>A pathogen-induced gene of barley encodes a HSP90 homologue showing striking similarity to vertebrate forms resident in the endoplasmic reticulum.</title>
        <authorList>
            <person name="Walther-Larsen H."/>
            <person name="Brandt J."/>
            <person name="Collinge D.B."/>
            <person name="Thordal-Christensen H."/>
        </authorList>
    </citation>
    <scope>NUCLEOTIDE SEQUENCE [MRNA]</scope>
    <source>
        <strain>cv. Pallas / P-01</strain>
        <tissue>Leaf</tissue>
    </source>
</reference>
<keyword id="KW-0067">ATP-binding</keyword>
<keyword id="KW-0106">Calcium</keyword>
<keyword id="KW-0143">Chaperone</keyword>
<keyword id="KW-0256">Endoplasmic reticulum</keyword>
<keyword id="KW-0325">Glycoprotein</keyword>
<keyword id="KW-0547">Nucleotide-binding</keyword>
<keyword id="KW-0732">Signal</keyword>
<dbReference type="EMBL" id="X67960">
    <property type="protein sequence ID" value="CAA48143.1"/>
    <property type="molecule type" value="mRNA"/>
</dbReference>
<dbReference type="PIR" id="S33533">
    <property type="entry name" value="S33533"/>
</dbReference>
<dbReference type="SMR" id="P36183"/>
<dbReference type="DIP" id="DIP-737N"/>
<dbReference type="ExpressionAtlas" id="P36183">
    <property type="expression patterns" value="baseline and differential"/>
</dbReference>
<dbReference type="GO" id="GO:0005788">
    <property type="term" value="C:endoplasmic reticulum lumen"/>
    <property type="evidence" value="ECO:0007669"/>
    <property type="project" value="UniProtKB-SubCell"/>
</dbReference>
<dbReference type="GO" id="GO:0005524">
    <property type="term" value="F:ATP binding"/>
    <property type="evidence" value="ECO:0007669"/>
    <property type="project" value="UniProtKB-KW"/>
</dbReference>
<dbReference type="GO" id="GO:0016887">
    <property type="term" value="F:ATP hydrolysis activity"/>
    <property type="evidence" value="ECO:0007669"/>
    <property type="project" value="InterPro"/>
</dbReference>
<dbReference type="GO" id="GO:0140662">
    <property type="term" value="F:ATP-dependent protein folding chaperone"/>
    <property type="evidence" value="ECO:0007669"/>
    <property type="project" value="InterPro"/>
</dbReference>
<dbReference type="GO" id="GO:0051082">
    <property type="term" value="F:unfolded protein binding"/>
    <property type="evidence" value="ECO:0007669"/>
    <property type="project" value="InterPro"/>
</dbReference>
<dbReference type="CDD" id="cd16927">
    <property type="entry name" value="HATPase_Hsp90-like"/>
    <property type="match status" value="1"/>
</dbReference>
<dbReference type="FunFam" id="3.30.230.80:FF:000006">
    <property type="entry name" value="endoplasmin homolog"/>
    <property type="match status" value="1"/>
</dbReference>
<dbReference type="FunFam" id="3.40.50.11260:FF:000006">
    <property type="entry name" value="endoplasmin homolog"/>
    <property type="match status" value="1"/>
</dbReference>
<dbReference type="FunFam" id="1.20.120.790:FF:000005">
    <property type="entry name" value="Endoplasmin-like isoform B"/>
    <property type="match status" value="1"/>
</dbReference>
<dbReference type="FunFam" id="3.30.565.10:FF:000005">
    <property type="entry name" value="Heat shock protein 90"/>
    <property type="match status" value="1"/>
</dbReference>
<dbReference type="Gene3D" id="3.30.230.80">
    <property type="match status" value="1"/>
</dbReference>
<dbReference type="Gene3D" id="3.40.50.11260">
    <property type="match status" value="1"/>
</dbReference>
<dbReference type="Gene3D" id="1.20.120.790">
    <property type="entry name" value="Heat shock protein 90, C-terminal domain"/>
    <property type="match status" value="1"/>
</dbReference>
<dbReference type="Gene3D" id="3.30.565.10">
    <property type="entry name" value="Histidine kinase-like ATPase, C-terminal domain"/>
    <property type="match status" value="1"/>
</dbReference>
<dbReference type="HAMAP" id="MF_00505">
    <property type="entry name" value="HSP90"/>
    <property type="match status" value="1"/>
</dbReference>
<dbReference type="InterPro" id="IPR036890">
    <property type="entry name" value="HATPase_C_sf"/>
</dbReference>
<dbReference type="InterPro" id="IPR019805">
    <property type="entry name" value="Heat_shock_protein_90_CS"/>
</dbReference>
<dbReference type="InterPro" id="IPR037196">
    <property type="entry name" value="HSP90_C"/>
</dbReference>
<dbReference type="InterPro" id="IPR001404">
    <property type="entry name" value="Hsp90_fam"/>
</dbReference>
<dbReference type="InterPro" id="IPR020575">
    <property type="entry name" value="Hsp90_N"/>
</dbReference>
<dbReference type="InterPro" id="IPR020568">
    <property type="entry name" value="Ribosomal_Su5_D2-typ_SF"/>
</dbReference>
<dbReference type="NCBIfam" id="NF003555">
    <property type="entry name" value="PRK05218.1"/>
    <property type="match status" value="1"/>
</dbReference>
<dbReference type="PANTHER" id="PTHR11528">
    <property type="entry name" value="HEAT SHOCK PROTEIN 90 FAMILY MEMBER"/>
    <property type="match status" value="1"/>
</dbReference>
<dbReference type="Pfam" id="PF13589">
    <property type="entry name" value="HATPase_c_3"/>
    <property type="match status" value="1"/>
</dbReference>
<dbReference type="Pfam" id="PF00183">
    <property type="entry name" value="HSP90"/>
    <property type="match status" value="1"/>
</dbReference>
<dbReference type="PIRSF" id="PIRSF002583">
    <property type="entry name" value="Hsp90"/>
    <property type="match status" value="1"/>
</dbReference>
<dbReference type="PRINTS" id="PR00775">
    <property type="entry name" value="HEATSHOCK90"/>
</dbReference>
<dbReference type="SMART" id="SM00387">
    <property type="entry name" value="HATPase_c"/>
    <property type="match status" value="1"/>
</dbReference>
<dbReference type="SUPFAM" id="SSF55874">
    <property type="entry name" value="ATPase domain of HSP90 chaperone/DNA topoisomerase II/histidine kinase"/>
    <property type="match status" value="1"/>
</dbReference>
<dbReference type="SUPFAM" id="SSF110942">
    <property type="entry name" value="HSP90 C-terminal domain"/>
    <property type="match status" value="1"/>
</dbReference>
<dbReference type="SUPFAM" id="SSF54211">
    <property type="entry name" value="Ribosomal protein S5 domain 2-like"/>
    <property type="match status" value="1"/>
</dbReference>
<dbReference type="PROSITE" id="PS00014">
    <property type="entry name" value="ER_TARGET"/>
    <property type="match status" value="1"/>
</dbReference>
<dbReference type="PROSITE" id="PS00298">
    <property type="entry name" value="HSP90"/>
    <property type="match status" value="1"/>
</dbReference>
<comment type="function">
    <text evidence="1">May have a molecular chaperone role in the processing of secreted materials.</text>
</comment>
<comment type="subcellular location">
    <subcellularLocation>
        <location>Endoplasmic reticulum lumen</location>
    </subcellularLocation>
</comment>
<comment type="induction">
    <text>Accumulates rapidly in leaves upon heat shock treatment and during infection by a pathogen.</text>
</comment>
<comment type="similarity">
    <text evidence="5">Belongs to the heat shock protein 90 family.</text>
</comment>
<protein>
    <recommendedName>
        <fullName>Endoplasmin homolog</fullName>
    </recommendedName>
    <alternativeName>
        <fullName>Glucose-regulated protein 94 homolog</fullName>
        <shortName>GRP-94 homolog</shortName>
    </alternativeName>
</protein>
<organism>
    <name type="scientific">Hordeum vulgare</name>
    <name type="common">Barley</name>
    <dbReference type="NCBI Taxonomy" id="4513"/>
    <lineage>
        <taxon>Eukaryota</taxon>
        <taxon>Viridiplantae</taxon>
        <taxon>Streptophyta</taxon>
        <taxon>Embryophyta</taxon>
        <taxon>Tracheophyta</taxon>
        <taxon>Spermatophyta</taxon>
        <taxon>Magnoliopsida</taxon>
        <taxon>Liliopsida</taxon>
        <taxon>Poales</taxon>
        <taxon>Poaceae</taxon>
        <taxon>BOP clade</taxon>
        <taxon>Pooideae</taxon>
        <taxon>Triticodae</taxon>
        <taxon>Triticeae</taxon>
        <taxon>Hordeinae</taxon>
        <taxon>Hordeum</taxon>
    </lineage>
</organism>
<feature type="signal peptide" evidence="3">
    <location>
        <begin position="1"/>
        <end position="18"/>
    </location>
</feature>
<feature type="chain" id="PRO_0000013603" description="Endoplasmin homolog">
    <location>
        <begin position="19"/>
        <end position="809"/>
    </location>
</feature>
<feature type="region of interest" description="Disordered" evidence="4">
    <location>
        <begin position="293"/>
        <end position="329"/>
    </location>
</feature>
<feature type="region of interest" description="Disordered" evidence="4">
    <location>
        <begin position="766"/>
        <end position="809"/>
    </location>
</feature>
<feature type="short sequence motif" description="Prevents secretion from ER">
    <location>
        <begin position="806"/>
        <end position="809"/>
    </location>
</feature>
<feature type="compositionally biased region" description="Acidic residues" evidence="4">
    <location>
        <begin position="293"/>
        <end position="320"/>
    </location>
</feature>
<feature type="compositionally biased region" description="Acidic residues" evidence="4">
    <location>
        <begin position="774"/>
        <end position="788"/>
    </location>
</feature>
<feature type="compositionally biased region" description="Basic and acidic residues" evidence="4">
    <location>
        <begin position="789"/>
        <end position="809"/>
    </location>
</feature>
<feature type="binding site" evidence="2">
    <location>
        <position position="111"/>
    </location>
    <ligand>
        <name>ATP</name>
        <dbReference type="ChEBI" id="CHEBI:30616"/>
    </ligand>
</feature>
<feature type="binding site" evidence="2">
    <location>
        <position position="155"/>
    </location>
    <ligand>
        <name>ATP</name>
        <dbReference type="ChEBI" id="CHEBI:30616"/>
    </ligand>
</feature>
<feature type="binding site" evidence="2">
    <location>
        <position position="168"/>
    </location>
    <ligand>
        <name>ATP</name>
        <dbReference type="ChEBI" id="CHEBI:30616"/>
    </ligand>
</feature>
<feature type="binding site" evidence="2">
    <location>
        <position position="200"/>
    </location>
    <ligand>
        <name>ATP</name>
        <dbReference type="ChEBI" id="CHEBI:30616"/>
    </ligand>
</feature>
<feature type="site" description="Important for ATP hydrolysis" evidence="2">
    <location>
        <position position="453"/>
    </location>
</feature>
<feature type="glycosylation site" description="N-linked (GlcNAc...) asparagine" evidence="3">
    <location>
        <position position="111"/>
    </location>
</feature>
<feature type="glycosylation site" description="N-linked (GlcNAc...) asparagine" evidence="3">
    <location>
        <position position="410"/>
    </location>
</feature>
<feature type="glycosylation site" description="N-linked (GlcNAc...) asparagine" evidence="3">
    <location>
        <position position="450"/>
    </location>
</feature>
<feature type="glycosylation site" description="N-linked (GlcNAc...) asparagine" evidence="3">
    <location>
        <position position="617"/>
    </location>
</feature>
<accession>P36183</accession>
<proteinExistence type="evidence at transcript level"/>
<name>ENPL_HORVU</name>
<sequence>MRKWALSCALLLVLLLTTLPDPAKKLQVNAEESSDEVGDFPKVEEKLGAVPHGLSTDSEVVQRESESISRKTLRNSAEKFEFQAEVSRLMDIIINSLYSNKDIFLRELISNASDALDKIRFLALTDKEVMGEGDTAKLEIQIKLDKENKILSIRDRGVGMTKEDLIKNLGTIAKSGTSAFVEKMQTGGDLNLIGQFGVGFYSVYLVADYVEVVSKHNDDKQYVWESKADGSFAISEDTWNEPLGRGTEIKLHLRDEAKEYLEEGKLKDLVKKYSEFINFPIYLWATKEVDVEVPADEEESNEEEESTTETTEEEETEDDEEKKPKTKTVKETTTEWELLNDMKAVWLRSPKEVTEEEYAKFYHSLAKDFGDDKPMSWSHFSAEGDVEFKALLFVPPKAPHDLYESYYNANKSNLKLYVRRVFISDEFDDLLPKYLSFLMGIVDSDTLPLNVSREMLQQHSSLKTIKKKLIRKALDMIRKLAEEDPDEYSNKEKTDDEKSAMEEKKGQYAKFWNEFGKSVKLGIIEDATNRNRLAKLLRFESSKSDGKLVSLDEYISRMKSGQKDIFYLTGSSKEQLEKSPFLEQLTKKNYEVIYFTDPVDEYLMQYLMDYEDKKFQNVSKEGLKLGKDSKLKDLKESFKELTDWWKKALDTEGIDSVKISNRLHNTPCVVVTSKYGWSSNMEKIMQAQTLSDASKQAYMRGKRVLEINPRHPIIKELRDKVAQDSDSEGLKQTARLVYQTALMESGFNLPDPKDFASSIYRSVQKSLDLSPDAAVEEEEEVEEPEVEEKESAKQEAEEPEHEQYDKDEL</sequence>